<feature type="transit peptide" description="Mitochondrion" evidence="4">
    <location>
        <begin position="1"/>
        <end position="47"/>
    </location>
</feature>
<feature type="chain" id="PRO_0000457993" description="Mitochondrial ATP-independent inner membrane protease subunit 1a">
    <location>
        <begin position="48"/>
        <end position="168"/>
    </location>
</feature>
<feature type="active site" evidence="2">
    <location>
        <position position="50"/>
    </location>
</feature>
<feature type="active site" evidence="2">
    <location>
        <position position="94"/>
    </location>
</feature>
<accession>Q6NLT8</accession>
<accession>Q9LPG9</accession>
<name>IMP1A_ARATH</name>
<keyword id="KW-0378">Hydrolase</keyword>
<keyword id="KW-0472">Membrane</keyword>
<keyword id="KW-0496">Mitochondrion</keyword>
<keyword id="KW-0999">Mitochondrion inner membrane</keyword>
<keyword id="KW-1185">Reference proteome</keyword>
<keyword id="KW-0809">Transit peptide</keyword>
<protein>
    <recommendedName>
        <fullName evidence="6">Mitochondrial ATP-independent inner membrane protease subunit 1a</fullName>
        <shortName evidence="6">AtIMP1a</shortName>
        <ecNumber evidence="3">3.4.21.-</ecNumber>
    </recommendedName>
</protein>
<proteinExistence type="evidence at transcript level"/>
<comment type="function">
    <text evidence="3">Catalyzes the removal of transit peptides required for the targeting of proteins from the mitochondrial matrix, across the inner membrane, into the inter-membrane space.</text>
</comment>
<comment type="subunit">
    <text evidence="1">Heterodimer of 2 subunits, IMP1A/B and IMP12.</text>
</comment>
<comment type="subcellular location">
    <subcellularLocation>
        <location evidence="5">Mitochondrion inner membrane</location>
    </subcellularLocation>
</comment>
<comment type="disruption phenotype">
    <text evidence="5">No visible phenotype.</text>
</comment>
<comment type="similarity">
    <text evidence="7">Belongs to the peptidase S26 family. IMP1 subfamily.</text>
</comment>
<comment type="sequence caution" evidence="7">
    <conflict type="erroneous gene model prediction">
        <sequence resource="EMBL-CDS" id="AAF78436"/>
    </conflict>
    <text>The predicted gene At1g53540 has been split into 2 genes: At1g53530 and At1g53540.</text>
</comment>
<dbReference type="EC" id="3.4.21.-" evidence="3"/>
<dbReference type="EMBL" id="AC018748">
    <property type="protein sequence ID" value="AAF78436.1"/>
    <property type="status" value="ALT_SEQ"/>
    <property type="molecule type" value="Genomic_DNA"/>
</dbReference>
<dbReference type="EMBL" id="CP002684">
    <property type="protein sequence ID" value="AEE32952.1"/>
    <property type="molecule type" value="Genomic_DNA"/>
</dbReference>
<dbReference type="EMBL" id="BT011608">
    <property type="protein sequence ID" value="AAS47614.1"/>
    <property type="molecule type" value="mRNA"/>
</dbReference>
<dbReference type="EMBL" id="BT012241">
    <property type="protein sequence ID" value="AAS76728.1"/>
    <property type="molecule type" value="mRNA"/>
</dbReference>
<dbReference type="EMBL" id="AK229157">
    <property type="protein sequence ID" value="BAF01030.1"/>
    <property type="molecule type" value="mRNA"/>
</dbReference>
<dbReference type="RefSeq" id="NP_175758.2">
    <property type="nucleotide sequence ID" value="NM_104231.4"/>
</dbReference>
<dbReference type="SMR" id="Q6NLT8"/>
<dbReference type="FunCoup" id="Q6NLT8">
    <property type="interactions" value="3567"/>
</dbReference>
<dbReference type="STRING" id="3702.Q6NLT8"/>
<dbReference type="MEROPS" id="S26.A08"/>
<dbReference type="PaxDb" id="3702-AT1G53530.1"/>
<dbReference type="ProteomicsDB" id="183094"/>
<dbReference type="EnsemblPlants" id="AT1G53530.1">
    <property type="protein sequence ID" value="AT1G53530.1"/>
    <property type="gene ID" value="AT1G53530"/>
</dbReference>
<dbReference type="GeneID" id="841788"/>
<dbReference type="Gramene" id="AT1G53530.1">
    <property type="protein sequence ID" value="AT1G53530.1"/>
    <property type="gene ID" value="AT1G53530"/>
</dbReference>
<dbReference type="KEGG" id="ath:AT1G53530"/>
<dbReference type="Araport" id="AT1G53530"/>
<dbReference type="TAIR" id="AT1G53530">
    <property type="gene designation" value="ATIMP1A"/>
</dbReference>
<dbReference type="eggNOG" id="KOG0171">
    <property type="taxonomic scope" value="Eukaryota"/>
</dbReference>
<dbReference type="HOGENOM" id="CLU_028723_4_3_1"/>
<dbReference type="InParanoid" id="Q6NLT8"/>
<dbReference type="OMA" id="LCKGPSM"/>
<dbReference type="OrthoDB" id="308440at2759"/>
<dbReference type="PRO" id="PR:Q6NLT8"/>
<dbReference type="Proteomes" id="UP000006548">
    <property type="component" value="Chromosome 1"/>
</dbReference>
<dbReference type="ExpressionAtlas" id="Q6NLT8">
    <property type="expression patterns" value="baseline and differential"/>
</dbReference>
<dbReference type="GO" id="GO:0005743">
    <property type="term" value="C:mitochondrial inner membrane"/>
    <property type="evidence" value="ECO:0007669"/>
    <property type="project" value="UniProtKB-SubCell"/>
</dbReference>
<dbReference type="GO" id="GO:0005739">
    <property type="term" value="C:mitochondrion"/>
    <property type="evidence" value="ECO:0000314"/>
    <property type="project" value="UniProtKB"/>
</dbReference>
<dbReference type="GO" id="GO:0004252">
    <property type="term" value="F:serine-type endopeptidase activity"/>
    <property type="evidence" value="ECO:0007669"/>
    <property type="project" value="InterPro"/>
</dbReference>
<dbReference type="GO" id="GO:0006465">
    <property type="term" value="P:signal peptide processing"/>
    <property type="evidence" value="ECO:0007669"/>
    <property type="project" value="InterPro"/>
</dbReference>
<dbReference type="CDD" id="cd06530">
    <property type="entry name" value="S26_SPase_I"/>
    <property type="match status" value="1"/>
</dbReference>
<dbReference type="FunFam" id="2.10.109.10:FF:000014">
    <property type="entry name" value="Inner membrane protease subunit 1"/>
    <property type="match status" value="1"/>
</dbReference>
<dbReference type="Gene3D" id="2.10.109.10">
    <property type="entry name" value="Umud Fragment, subunit A"/>
    <property type="match status" value="1"/>
</dbReference>
<dbReference type="InterPro" id="IPR036286">
    <property type="entry name" value="LexA/Signal_pep-like_sf"/>
</dbReference>
<dbReference type="InterPro" id="IPR052064">
    <property type="entry name" value="Mito_IMP1_subunit"/>
</dbReference>
<dbReference type="InterPro" id="IPR000223">
    <property type="entry name" value="Pept_S26A_signal_pept_1"/>
</dbReference>
<dbReference type="InterPro" id="IPR019758">
    <property type="entry name" value="Pept_S26A_signal_pept_1_CS"/>
</dbReference>
<dbReference type="InterPro" id="IPR019533">
    <property type="entry name" value="Peptidase_S26"/>
</dbReference>
<dbReference type="NCBIfam" id="TIGR02227">
    <property type="entry name" value="sigpep_I_bact"/>
    <property type="match status" value="1"/>
</dbReference>
<dbReference type="PANTHER" id="PTHR12383:SF16">
    <property type="entry name" value="MITOCHONDRIAL INNER MEMBRANE PROTEASE SUBUNIT 1"/>
    <property type="match status" value="1"/>
</dbReference>
<dbReference type="PANTHER" id="PTHR12383">
    <property type="entry name" value="PROTEASE FAMILY S26 MITOCHONDRIAL INNER MEMBRANE PROTEASE-RELATED"/>
    <property type="match status" value="1"/>
</dbReference>
<dbReference type="Pfam" id="PF10502">
    <property type="entry name" value="Peptidase_S26"/>
    <property type="match status" value="2"/>
</dbReference>
<dbReference type="PRINTS" id="PR00727">
    <property type="entry name" value="LEADERPTASE"/>
</dbReference>
<dbReference type="SUPFAM" id="SSF51306">
    <property type="entry name" value="LexA/Signal peptidase"/>
    <property type="match status" value="1"/>
</dbReference>
<dbReference type="PROSITE" id="PS00761">
    <property type="entry name" value="SPASE_I_3"/>
    <property type="match status" value="1"/>
</dbReference>
<reference key="1">
    <citation type="journal article" date="2000" name="Nature">
        <title>Sequence and analysis of chromosome 1 of the plant Arabidopsis thaliana.</title>
        <authorList>
            <person name="Theologis A."/>
            <person name="Ecker J.R."/>
            <person name="Palm C.J."/>
            <person name="Federspiel N.A."/>
            <person name="Kaul S."/>
            <person name="White O."/>
            <person name="Alonso J."/>
            <person name="Altafi H."/>
            <person name="Araujo R."/>
            <person name="Bowman C.L."/>
            <person name="Brooks S.Y."/>
            <person name="Buehler E."/>
            <person name="Chan A."/>
            <person name="Chao Q."/>
            <person name="Chen H."/>
            <person name="Cheuk R.F."/>
            <person name="Chin C.W."/>
            <person name="Chung M.K."/>
            <person name="Conn L."/>
            <person name="Conway A.B."/>
            <person name="Conway A.R."/>
            <person name="Creasy T.H."/>
            <person name="Dewar K."/>
            <person name="Dunn P."/>
            <person name="Etgu P."/>
            <person name="Feldblyum T.V."/>
            <person name="Feng J.-D."/>
            <person name="Fong B."/>
            <person name="Fujii C.Y."/>
            <person name="Gill J.E."/>
            <person name="Goldsmith A.D."/>
            <person name="Haas B."/>
            <person name="Hansen N.F."/>
            <person name="Hughes B."/>
            <person name="Huizar L."/>
            <person name="Hunter J.L."/>
            <person name="Jenkins J."/>
            <person name="Johnson-Hopson C."/>
            <person name="Khan S."/>
            <person name="Khaykin E."/>
            <person name="Kim C.J."/>
            <person name="Koo H.L."/>
            <person name="Kremenetskaia I."/>
            <person name="Kurtz D.B."/>
            <person name="Kwan A."/>
            <person name="Lam B."/>
            <person name="Langin-Hooper S."/>
            <person name="Lee A."/>
            <person name="Lee J.M."/>
            <person name="Lenz C.A."/>
            <person name="Li J.H."/>
            <person name="Li Y.-P."/>
            <person name="Lin X."/>
            <person name="Liu S.X."/>
            <person name="Liu Z.A."/>
            <person name="Luros J.S."/>
            <person name="Maiti R."/>
            <person name="Marziali A."/>
            <person name="Militscher J."/>
            <person name="Miranda M."/>
            <person name="Nguyen M."/>
            <person name="Nierman W.C."/>
            <person name="Osborne B.I."/>
            <person name="Pai G."/>
            <person name="Peterson J."/>
            <person name="Pham P.K."/>
            <person name="Rizzo M."/>
            <person name="Rooney T."/>
            <person name="Rowley D."/>
            <person name="Sakano H."/>
            <person name="Salzberg S.L."/>
            <person name="Schwartz J.R."/>
            <person name="Shinn P."/>
            <person name="Southwick A.M."/>
            <person name="Sun H."/>
            <person name="Tallon L.J."/>
            <person name="Tambunga G."/>
            <person name="Toriumi M.J."/>
            <person name="Town C.D."/>
            <person name="Utterback T."/>
            <person name="Van Aken S."/>
            <person name="Vaysberg M."/>
            <person name="Vysotskaia V.S."/>
            <person name="Walker M."/>
            <person name="Wu D."/>
            <person name="Yu G."/>
            <person name="Fraser C.M."/>
            <person name="Venter J.C."/>
            <person name="Davis R.W."/>
        </authorList>
    </citation>
    <scope>NUCLEOTIDE SEQUENCE [LARGE SCALE GENOMIC DNA]</scope>
    <source>
        <strain>cv. Columbia</strain>
    </source>
</reference>
<reference key="2">
    <citation type="journal article" date="2017" name="Plant J.">
        <title>Araport11: a complete reannotation of the Arabidopsis thaliana reference genome.</title>
        <authorList>
            <person name="Cheng C.Y."/>
            <person name="Krishnakumar V."/>
            <person name="Chan A.P."/>
            <person name="Thibaud-Nissen F."/>
            <person name="Schobel S."/>
            <person name="Town C.D."/>
        </authorList>
    </citation>
    <scope>GENOME REANNOTATION</scope>
    <source>
        <strain>cv. Columbia</strain>
    </source>
</reference>
<reference key="3">
    <citation type="submission" date="2004-02" db="EMBL/GenBank/DDBJ databases">
        <title>Arabidopsis cDNA clones.</title>
        <authorList>
            <person name="Kim C.J."/>
            <person name="Chen H."/>
            <person name="Cheuk R.F."/>
            <person name="Shinn P."/>
            <person name="Ecker J.R."/>
        </authorList>
    </citation>
    <scope>NUCLEOTIDE SEQUENCE [LARGE SCALE MRNA]</scope>
    <source>
        <strain>cv. Columbia</strain>
    </source>
</reference>
<reference key="4">
    <citation type="submission" date="2006-07" db="EMBL/GenBank/DDBJ databases">
        <title>Large-scale analysis of RIKEN Arabidopsis full-length (RAFL) cDNAs.</title>
        <authorList>
            <person name="Totoki Y."/>
            <person name="Seki M."/>
            <person name="Ishida J."/>
            <person name="Nakajima M."/>
            <person name="Enju A."/>
            <person name="Kamiya A."/>
            <person name="Narusaka M."/>
            <person name="Shin-i T."/>
            <person name="Nakagawa M."/>
            <person name="Sakamoto N."/>
            <person name="Oishi K."/>
            <person name="Kohara Y."/>
            <person name="Kobayashi M."/>
            <person name="Toyoda A."/>
            <person name="Sakaki Y."/>
            <person name="Sakurai T."/>
            <person name="Iida K."/>
            <person name="Akiyama K."/>
            <person name="Satou M."/>
            <person name="Toyoda T."/>
            <person name="Konagaya A."/>
            <person name="Carninci P."/>
            <person name="Kawai J."/>
            <person name="Hayashizaki Y."/>
            <person name="Shinozaki K."/>
        </authorList>
    </citation>
    <scope>NUCLEOTIDE SEQUENCE [LARGE SCALE MRNA]</scope>
    <source>
        <strain>cv. Columbia</strain>
    </source>
</reference>
<reference key="5">
    <citation type="journal article" date="2012" name="Physiol. Plantarum">
        <title>Proteolytic system of plant mitochondria.</title>
        <authorList>
            <person name="Kwasniak M."/>
            <person name="Pogorzelec L."/>
            <person name="Migdal I."/>
            <person name="Smakowska E."/>
            <person name="Janska H."/>
        </authorList>
    </citation>
    <scope>IDENTIFICATION</scope>
    <scope>REVIEW OF MITOCHONDRIAL PROTEOLYTIC SYSTEM</scope>
</reference>
<reference key="6">
    <citation type="journal article" date="2017" name="Front. Plant Sci.">
        <title>AtOMA1 affects the OXPHOS system and plant growth in contrast to other newly identified ATP-independent proteases in Arabidopsis mitochondria.</title>
        <authorList>
            <person name="Migdal I."/>
            <person name="Skibior-Blaszczyk R."/>
            <person name="Heidorn-Czarna M."/>
            <person name="Kolodziejczak M."/>
            <person name="Garbiec A."/>
            <person name="Janska H."/>
        </authorList>
    </citation>
    <scope>DISRUPTION PHENOTYPE</scope>
    <scope>SUBCELLULAR LOCATION</scope>
    <source>
        <strain>cv. Columbia</strain>
    </source>
</reference>
<organism>
    <name type="scientific">Arabidopsis thaliana</name>
    <name type="common">Mouse-ear cress</name>
    <dbReference type="NCBI Taxonomy" id="3702"/>
    <lineage>
        <taxon>Eukaryota</taxon>
        <taxon>Viridiplantae</taxon>
        <taxon>Streptophyta</taxon>
        <taxon>Embryophyta</taxon>
        <taxon>Tracheophyta</taxon>
        <taxon>Spermatophyta</taxon>
        <taxon>Magnoliopsida</taxon>
        <taxon>eudicotyledons</taxon>
        <taxon>Gunneridae</taxon>
        <taxon>Pentapetalae</taxon>
        <taxon>rosids</taxon>
        <taxon>malvids</taxon>
        <taxon>Brassicales</taxon>
        <taxon>Brassicaceae</taxon>
        <taxon>Camelineae</taxon>
        <taxon>Arabidopsis</taxon>
    </lineage>
</organism>
<evidence type="ECO:0000250" key="1">
    <source>
        <dbReference type="UniProtKB" id="P28627"/>
    </source>
</evidence>
<evidence type="ECO:0000250" key="2">
    <source>
        <dbReference type="UniProtKB" id="P28628"/>
    </source>
</evidence>
<evidence type="ECO:0000250" key="3">
    <source>
        <dbReference type="UniProtKB" id="Q96LU5"/>
    </source>
</evidence>
<evidence type="ECO:0000255" key="4"/>
<evidence type="ECO:0000269" key="5">
    <source>
    </source>
</evidence>
<evidence type="ECO:0000303" key="6">
    <source>
    </source>
</evidence>
<evidence type="ECO:0000305" key="7"/>
<evidence type="ECO:0000312" key="8">
    <source>
        <dbReference type="Araport" id="AT1G53530"/>
    </source>
</evidence>
<evidence type="ECO:0000312" key="9">
    <source>
        <dbReference type="EMBL" id="AAF78436.1"/>
    </source>
</evidence>
<sequence>MRMTFLSYLKQWRGTAKEAFENVSIVAKFLCLLHVTDRYIISTTHVHGPSMLPTLNLTGDVILAEHLSHRFGKIGLGDVVLVRSPRDPKRMVTKRILGLEGDRLTFSADPLVGDASVSVLVPKGHVWIQGDNLYASTDSRHFGPVPYSLIEGKALLRVWPPEYFGSLR</sequence>
<gene>
    <name evidence="6" type="primary">IMP1A</name>
    <name evidence="8" type="ordered locus">At1g53530</name>
    <name evidence="9" type="ORF">F22G10.30</name>
</gene>